<protein>
    <recommendedName>
        <fullName>B3 domain-containing protein Os01g0234100</fullName>
    </recommendedName>
</protein>
<sequence length="495" mass="55530">MAIDQPIKKRGRPPGSKNTKNKMEQKMELVHQRLALLDSSSGSDRDDDIGPRAIIIDCDEDDTDDVMEVVPLKMLMPKEVENEQRTVPGIPQTCNTQNTSNGRTNTTEVPVKGQNKCASYLPKKSSVQAFCGSAMKRAQEIQTKLPAEHPSFVKHMLHSHVVSGFWLGLPAGFCNKYLPKHDTDIVLEDENGNNHNTNYLGGKQGLSAGWRGFAINHDIKVGDVVVFELVSTTKFKVHIIRDKNISPTDRAPGLKSFYACKKRKISKEATDNATKPKEDPETTRVSSKVAHDDTQNLVHEAIDGIRFSDSEMSFDDVMSYSNFNIVVDGLVIDCKFPDHQRRTYYELCCAQKSFLHRHLLRQLSLTLVVGVIMETINIAEGIRACGAGTSSQEDFLIWKKTLQSFDLLGMNVAFLLKRVDDILGLPEQPRDPSECSKYNELKLERSRAGEKVKALESMMLTVKDVLKKIDAEMEEMESSVRNHDIALRKIATAPW</sequence>
<accession>Q0JP99</accession>
<accession>A0A0P0V028</accession>
<accession>Q5NAW9</accession>
<name>Y1341_ORYSJ</name>
<dbReference type="EMBL" id="AP002481">
    <property type="protein sequence ID" value="BAD81380.1"/>
    <property type="status" value="ALT_SEQ"/>
    <property type="molecule type" value="Genomic_DNA"/>
</dbReference>
<dbReference type="EMBL" id="AP008207">
    <property type="protein sequence ID" value="BAF04429.1"/>
    <property type="molecule type" value="Genomic_DNA"/>
</dbReference>
<dbReference type="EMBL" id="AP014957">
    <property type="protein sequence ID" value="BAS71203.1"/>
    <property type="molecule type" value="Genomic_DNA"/>
</dbReference>
<dbReference type="EMBL" id="AK106332">
    <property type="status" value="NOT_ANNOTATED_CDS"/>
    <property type="molecule type" value="mRNA"/>
</dbReference>
<dbReference type="RefSeq" id="XP_015623792.1">
    <property type="nucleotide sequence ID" value="XM_015768306.1"/>
</dbReference>
<dbReference type="SMR" id="Q0JP99"/>
<dbReference type="FunCoup" id="Q0JP99">
    <property type="interactions" value="1544"/>
</dbReference>
<dbReference type="STRING" id="39947.Q0JP99"/>
<dbReference type="PaxDb" id="39947-Q0JP99"/>
<dbReference type="EnsemblPlants" id="Os01t0234100-01">
    <property type="protein sequence ID" value="Os01t0234100-01"/>
    <property type="gene ID" value="Os01g0234100"/>
</dbReference>
<dbReference type="Gramene" id="Os01t0234100-01">
    <property type="protein sequence ID" value="Os01t0234100-01"/>
    <property type="gene ID" value="Os01g0234100"/>
</dbReference>
<dbReference type="KEGG" id="dosa:Os01g0234100"/>
<dbReference type="eggNOG" id="ENOG502QQS4">
    <property type="taxonomic scope" value="Eukaryota"/>
</dbReference>
<dbReference type="HOGENOM" id="CLU_041497_0_0_1"/>
<dbReference type="InParanoid" id="Q0JP99"/>
<dbReference type="OMA" id="HQRRTYY"/>
<dbReference type="OrthoDB" id="1909330at2759"/>
<dbReference type="Proteomes" id="UP000000763">
    <property type="component" value="Chromosome 1"/>
</dbReference>
<dbReference type="Proteomes" id="UP000059680">
    <property type="component" value="Chromosome 1"/>
</dbReference>
<dbReference type="GO" id="GO:0005634">
    <property type="term" value="C:nucleus"/>
    <property type="evidence" value="ECO:0007669"/>
    <property type="project" value="UniProtKB-SubCell"/>
</dbReference>
<dbReference type="GO" id="GO:0003677">
    <property type="term" value="F:DNA binding"/>
    <property type="evidence" value="ECO:0007669"/>
    <property type="project" value="UniProtKB-KW"/>
</dbReference>
<dbReference type="CDD" id="cd10017">
    <property type="entry name" value="B3_DNA"/>
    <property type="match status" value="1"/>
</dbReference>
<dbReference type="Gene3D" id="2.40.330.10">
    <property type="entry name" value="DNA-binding pseudobarrel domain"/>
    <property type="match status" value="1"/>
</dbReference>
<dbReference type="InterPro" id="IPR003340">
    <property type="entry name" value="B3_DNA-bd"/>
</dbReference>
<dbReference type="InterPro" id="IPR015300">
    <property type="entry name" value="DNA-bd_pseudobarrel_sf"/>
</dbReference>
<dbReference type="InterPro" id="IPR044837">
    <property type="entry name" value="REM16-like"/>
</dbReference>
<dbReference type="PANTHER" id="PTHR31391:SF101">
    <property type="entry name" value="B3 DOMAIN-CONTAINING PROTEIN OS01G0234100"/>
    <property type="match status" value="1"/>
</dbReference>
<dbReference type="PANTHER" id="PTHR31391">
    <property type="entry name" value="B3 DOMAIN-CONTAINING PROTEIN OS11G0197600-RELATED"/>
    <property type="match status" value="1"/>
</dbReference>
<dbReference type="Pfam" id="PF02362">
    <property type="entry name" value="B3"/>
    <property type="match status" value="1"/>
</dbReference>
<dbReference type="SMART" id="SM01019">
    <property type="entry name" value="B3"/>
    <property type="match status" value="1"/>
</dbReference>
<dbReference type="SUPFAM" id="SSF101936">
    <property type="entry name" value="DNA-binding pseudobarrel domain"/>
    <property type="match status" value="1"/>
</dbReference>
<dbReference type="PROSITE" id="PS50863">
    <property type="entry name" value="B3"/>
    <property type="match status" value="1"/>
</dbReference>
<organism>
    <name type="scientific">Oryza sativa subsp. japonica</name>
    <name type="common">Rice</name>
    <dbReference type="NCBI Taxonomy" id="39947"/>
    <lineage>
        <taxon>Eukaryota</taxon>
        <taxon>Viridiplantae</taxon>
        <taxon>Streptophyta</taxon>
        <taxon>Embryophyta</taxon>
        <taxon>Tracheophyta</taxon>
        <taxon>Spermatophyta</taxon>
        <taxon>Magnoliopsida</taxon>
        <taxon>Liliopsida</taxon>
        <taxon>Poales</taxon>
        <taxon>Poaceae</taxon>
        <taxon>BOP clade</taxon>
        <taxon>Oryzoideae</taxon>
        <taxon>Oryzeae</taxon>
        <taxon>Oryzinae</taxon>
        <taxon>Oryza</taxon>
        <taxon>Oryza sativa</taxon>
    </lineage>
</organism>
<proteinExistence type="evidence at transcript level"/>
<comment type="subcellular location">
    <subcellularLocation>
        <location evidence="1">Nucleus</location>
    </subcellularLocation>
</comment>
<comment type="sequence caution" evidence="3">
    <conflict type="erroneous gene model prediction">
        <sequence resource="EMBL-CDS" id="BAD81380"/>
    </conflict>
</comment>
<evidence type="ECO:0000255" key="1">
    <source>
        <dbReference type="PROSITE-ProRule" id="PRU00326"/>
    </source>
</evidence>
<evidence type="ECO:0000256" key="2">
    <source>
        <dbReference type="SAM" id="MobiDB-lite"/>
    </source>
</evidence>
<evidence type="ECO:0000305" key="3"/>
<reference key="1">
    <citation type="journal article" date="2002" name="Nature">
        <title>The genome sequence and structure of rice chromosome 1.</title>
        <authorList>
            <person name="Sasaki T."/>
            <person name="Matsumoto T."/>
            <person name="Yamamoto K."/>
            <person name="Sakata K."/>
            <person name="Baba T."/>
            <person name="Katayose Y."/>
            <person name="Wu J."/>
            <person name="Niimura Y."/>
            <person name="Cheng Z."/>
            <person name="Nagamura Y."/>
            <person name="Antonio B.A."/>
            <person name="Kanamori H."/>
            <person name="Hosokawa S."/>
            <person name="Masukawa M."/>
            <person name="Arikawa K."/>
            <person name="Chiden Y."/>
            <person name="Hayashi M."/>
            <person name="Okamoto M."/>
            <person name="Ando T."/>
            <person name="Aoki H."/>
            <person name="Arita K."/>
            <person name="Hamada M."/>
            <person name="Harada C."/>
            <person name="Hijishita S."/>
            <person name="Honda M."/>
            <person name="Ichikawa Y."/>
            <person name="Idonuma A."/>
            <person name="Iijima M."/>
            <person name="Ikeda M."/>
            <person name="Ikeno M."/>
            <person name="Ito S."/>
            <person name="Ito T."/>
            <person name="Ito Y."/>
            <person name="Ito Y."/>
            <person name="Iwabuchi A."/>
            <person name="Kamiya K."/>
            <person name="Karasawa W."/>
            <person name="Katagiri S."/>
            <person name="Kikuta A."/>
            <person name="Kobayashi N."/>
            <person name="Kono I."/>
            <person name="Machita K."/>
            <person name="Maehara T."/>
            <person name="Mizuno H."/>
            <person name="Mizubayashi T."/>
            <person name="Mukai Y."/>
            <person name="Nagasaki H."/>
            <person name="Nakashima M."/>
            <person name="Nakama Y."/>
            <person name="Nakamichi Y."/>
            <person name="Nakamura M."/>
            <person name="Namiki N."/>
            <person name="Negishi M."/>
            <person name="Ohta I."/>
            <person name="Ono N."/>
            <person name="Saji S."/>
            <person name="Sakai K."/>
            <person name="Shibata M."/>
            <person name="Shimokawa T."/>
            <person name="Shomura A."/>
            <person name="Song J."/>
            <person name="Takazaki Y."/>
            <person name="Terasawa K."/>
            <person name="Tsuji K."/>
            <person name="Waki K."/>
            <person name="Yamagata H."/>
            <person name="Yamane H."/>
            <person name="Yoshiki S."/>
            <person name="Yoshihara R."/>
            <person name="Yukawa K."/>
            <person name="Zhong H."/>
            <person name="Iwama H."/>
            <person name="Endo T."/>
            <person name="Ito H."/>
            <person name="Hahn J.H."/>
            <person name="Kim H.-I."/>
            <person name="Eun M.-Y."/>
            <person name="Yano M."/>
            <person name="Jiang J."/>
            <person name="Gojobori T."/>
        </authorList>
    </citation>
    <scope>NUCLEOTIDE SEQUENCE [LARGE SCALE GENOMIC DNA]</scope>
    <source>
        <strain>cv. Nipponbare</strain>
    </source>
</reference>
<reference key="2">
    <citation type="journal article" date="2005" name="Nature">
        <title>The map-based sequence of the rice genome.</title>
        <authorList>
            <consortium name="International rice genome sequencing project (IRGSP)"/>
        </authorList>
    </citation>
    <scope>NUCLEOTIDE SEQUENCE [LARGE SCALE GENOMIC DNA]</scope>
    <source>
        <strain>cv. Nipponbare</strain>
    </source>
</reference>
<reference key="3">
    <citation type="journal article" date="2008" name="Nucleic Acids Res.">
        <title>The rice annotation project database (RAP-DB): 2008 update.</title>
        <authorList>
            <consortium name="The rice annotation project (RAP)"/>
        </authorList>
    </citation>
    <scope>GENOME REANNOTATION</scope>
    <source>
        <strain>cv. Nipponbare</strain>
    </source>
</reference>
<reference key="4">
    <citation type="journal article" date="2013" name="Rice">
        <title>Improvement of the Oryza sativa Nipponbare reference genome using next generation sequence and optical map data.</title>
        <authorList>
            <person name="Kawahara Y."/>
            <person name="de la Bastide M."/>
            <person name="Hamilton J.P."/>
            <person name="Kanamori H."/>
            <person name="McCombie W.R."/>
            <person name="Ouyang S."/>
            <person name="Schwartz D.C."/>
            <person name="Tanaka T."/>
            <person name="Wu J."/>
            <person name="Zhou S."/>
            <person name="Childs K.L."/>
            <person name="Davidson R.M."/>
            <person name="Lin H."/>
            <person name="Quesada-Ocampo L."/>
            <person name="Vaillancourt B."/>
            <person name="Sakai H."/>
            <person name="Lee S.S."/>
            <person name="Kim J."/>
            <person name="Numa H."/>
            <person name="Itoh T."/>
            <person name="Buell C.R."/>
            <person name="Matsumoto T."/>
        </authorList>
    </citation>
    <scope>GENOME REANNOTATION</scope>
    <source>
        <strain>cv. Nipponbare</strain>
    </source>
</reference>
<reference key="5">
    <citation type="journal article" date="2003" name="Science">
        <title>Collection, mapping, and annotation of over 28,000 cDNA clones from japonica rice.</title>
        <authorList>
            <consortium name="The rice full-length cDNA consortium"/>
        </authorList>
    </citation>
    <scope>NUCLEOTIDE SEQUENCE [LARGE SCALE MRNA]</scope>
    <source>
        <strain>cv. Nipponbare</strain>
    </source>
</reference>
<feature type="chain" id="PRO_0000376944" description="B3 domain-containing protein Os01g0234100">
    <location>
        <begin position="1"/>
        <end position="495"/>
    </location>
</feature>
<feature type="DNA-binding region" description="TF-B3" evidence="1">
    <location>
        <begin position="152"/>
        <end position="243"/>
    </location>
</feature>
<feature type="region of interest" description="Disordered" evidence="2">
    <location>
        <begin position="1"/>
        <end position="25"/>
    </location>
</feature>
<feature type="region of interest" description="Disordered" evidence="2">
    <location>
        <begin position="88"/>
        <end position="108"/>
    </location>
</feature>
<feature type="region of interest" description="Disordered" evidence="2">
    <location>
        <begin position="268"/>
        <end position="289"/>
    </location>
</feature>
<feature type="compositionally biased region" description="Polar residues" evidence="2">
    <location>
        <begin position="92"/>
        <end position="108"/>
    </location>
</feature>
<feature type="compositionally biased region" description="Basic and acidic residues" evidence="2">
    <location>
        <begin position="268"/>
        <end position="282"/>
    </location>
</feature>
<feature type="sequence conflict" description="In Ref. 5; AK106332." evidence="3" ref="5">
    <original>K</original>
    <variation>E</variation>
    <location>
        <position position="453"/>
    </location>
</feature>
<keyword id="KW-0238">DNA-binding</keyword>
<keyword id="KW-0539">Nucleus</keyword>
<keyword id="KW-1185">Reference proteome</keyword>
<keyword id="KW-0804">Transcription</keyword>
<keyword id="KW-0805">Transcription regulation</keyword>
<gene>
    <name type="ordered locus">Os01g0234100</name>
    <name type="ordered locus">LOC_Os01g13300</name>
    <name type="ORF">P0702F03.19</name>
</gene>